<dbReference type="EC" id="1.4.4.2" evidence="2"/>
<dbReference type="EMBL" id="AE006468">
    <property type="protein sequence ID" value="AAL21928.1"/>
    <property type="molecule type" value="Genomic_DNA"/>
</dbReference>
<dbReference type="RefSeq" id="NP_461969.1">
    <property type="nucleotide sequence ID" value="NC_003197.2"/>
</dbReference>
<dbReference type="RefSeq" id="WP_000194975.1">
    <property type="nucleotide sequence ID" value="NC_003197.2"/>
</dbReference>
<dbReference type="SMR" id="Q8ZM76"/>
<dbReference type="STRING" id="99287.STM3053"/>
<dbReference type="PaxDb" id="99287-STM3053"/>
<dbReference type="GeneID" id="1254576"/>
<dbReference type="KEGG" id="stm:STM3053"/>
<dbReference type="PATRIC" id="fig|99287.12.peg.3234"/>
<dbReference type="HOGENOM" id="CLU_004620_3_2_6"/>
<dbReference type="OMA" id="RNLICTC"/>
<dbReference type="PhylomeDB" id="Q8ZM76"/>
<dbReference type="BioCyc" id="SENT99287:STM3053-MONOMER"/>
<dbReference type="Proteomes" id="UP000001014">
    <property type="component" value="Chromosome"/>
</dbReference>
<dbReference type="GO" id="GO:0005829">
    <property type="term" value="C:cytosol"/>
    <property type="evidence" value="ECO:0000318"/>
    <property type="project" value="GO_Central"/>
</dbReference>
<dbReference type="GO" id="GO:0005960">
    <property type="term" value="C:glycine cleavage complex"/>
    <property type="evidence" value="ECO:0000318"/>
    <property type="project" value="GO_Central"/>
</dbReference>
<dbReference type="GO" id="GO:0016594">
    <property type="term" value="F:glycine binding"/>
    <property type="evidence" value="ECO:0000318"/>
    <property type="project" value="GO_Central"/>
</dbReference>
<dbReference type="GO" id="GO:0004375">
    <property type="term" value="F:glycine dehydrogenase (decarboxylating) activity"/>
    <property type="evidence" value="ECO:0000318"/>
    <property type="project" value="GO_Central"/>
</dbReference>
<dbReference type="GO" id="GO:0030170">
    <property type="term" value="F:pyridoxal phosphate binding"/>
    <property type="evidence" value="ECO:0000318"/>
    <property type="project" value="GO_Central"/>
</dbReference>
<dbReference type="GO" id="GO:0019464">
    <property type="term" value="P:glycine decarboxylation via glycine cleavage system"/>
    <property type="evidence" value="ECO:0000318"/>
    <property type="project" value="GO_Central"/>
</dbReference>
<dbReference type="CDD" id="cd00613">
    <property type="entry name" value="GDC-P"/>
    <property type="match status" value="2"/>
</dbReference>
<dbReference type="FunFam" id="3.40.640.10:FF:000005">
    <property type="entry name" value="Glycine dehydrogenase (decarboxylating), mitochondrial"/>
    <property type="match status" value="1"/>
</dbReference>
<dbReference type="FunFam" id="3.90.1150.10:FF:000007">
    <property type="entry name" value="Glycine dehydrogenase (decarboxylating), mitochondrial"/>
    <property type="match status" value="1"/>
</dbReference>
<dbReference type="FunFam" id="3.40.640.10:FF:000007">
    <property type="entry name" value="glycine dehydrogenase (Decarboxylating), mitochondrial"/>
    <property type="match status" value="1"/>
</dbReference>
<dbReference type="Gene3D" id="3.90.1150.10">
    <property type="entry name" value="Aspartate Aminotransferase, domain 1"/>
    <property type="match status" value="1"/>
</dbReference>
<dbReference type="Gene3D" id="3.40.640.10">
    <property type="entry name" value="Type I PLP-dependent aspartate aminotransferase-like (Major domain)"/>
    <property type="match status" value="2"/>
</dbReference>
<dbReference type="HAMAP" id="MF_00711">
    <property type="entry name" value="GcvP"/>
    <property type="match status" value="1"/>
</dbReference>
<dbReference type="InterPro" id="IPR003437">
    <property type="entry name" value="GcvP"/>
</dbReference>
<dbReference type="InterPro" id="IPR049316">
    <property type="entry name" value="GDC-P_C"/>
</dbReference>
<dbReference type="InterPro" id="IPR049315">
    <property type="entry name" value="GDC-P_N"/>
</dbReference>
<dbReference type="InterPro" id="IPR020581">
    <property type="entry name" value="GDC_P"/>
</dbReference>
<dbReference type="InterPro" id="IPR015424">
    <property type="entry name" value="PyrdxlP-dep_Trfase"/>
</dbReference>
<dbReference type="InterPro" id="IPR015421">
    <property type="entry name" value="PyrdxlP-dep_Trfase_major"/>
</dbReference>
<dbReference type="InterPro" id="IPR015422">
    <property type="entry name" value="PyrdxlP-dep_Trfase_small"/>
</dbReference>
<dbReference type="NCBIfam" id="TIGR00461">
    <property type="entry name" value="gcvP"/>
    <property type="match status" value="1"/>
</dbReference>
<dbReference type="NCBIfam" id="NF003346">
    <property type="entry name" value="PRK04366.1"/>
    <property type="match status" value="1"/>
</dbReference>
<dbReference type="PANTHER" id="PTHR11773:SF13">
    <property type="entry name" value="GLYCINE DEHYDROGENASE (DECARBOXYLATING)"/>
    <property type="match status" value="1"/>
</dbReference>
<dbReference type="PANTHER" id="PTHR11773">
    <property type="entry name" value="GLYCINE DEHYDROGENASE, DECARBOXYLATING"/>
    <property type="match status" value="1"/>
</dbReference>
<dbReference type="Pfam" id="PF21478">
    <property type="entry name" value="GcvP2_C"/>
    <property type="match status" value="1"/>
</dbReference>
<dbReference type="Pfam" id="PF02347">
    <property type="entry name" value="GDC-P"/>
    <property type="match status" value="2"/>
</dbReference>
<dbReference type="SUPFAM" id="SSF53383">
    <property type="entry name" value="PLP-dependent transferases"/>
    <property type="match status" value="2"/>
</dbReference>
<organism>
    <name type="scientific">Salmonella typhimurium (strain LT2 / SGSC1412 / ATCC 700720)</name>
    <dbReference type="NCBI Taxonomy" id="99287"/>
    <lineage>
        <taxon>Bacteria</taxon>
        <taxon>Pseudomonadati</taxon>
        <taxon>Pseudomonadota</taxon>
        <taxon>Gammaproteobacteria</taxon>
        <taxon>Enterobacterales</taxon>
        <taxon>Enterobacteriaceae</taxon>
        <taxon>Salmonella</taxon>
    </lineage>
</organism>
<protein>
    <recommendedName>
        <fullName evidence="2">Glycine dehydrogenase (decarboxylating)</fullName>
        <ecNumber evidence="2">1.4.4.2</ecNumber>
    </recommendedName>
    <alternativeName>
        <fullName evidence="2">Glycine cleavage system P-protein</fullName>
    </alternativeName>
    <alternativeName>
        <fullName evidence="2">Glycine decarboxylase</fullName>
    </alternativeName>
    <alternativeName>
        <fullName evidence="2">Glycine dehydrogenase (aminomethyl-transferring)</fullName>
    </alternativeName>
</protein>
<evidence type="ECO:0000250" key="1"/>
<evidence type="ECO:0000255" key="2">
    <source>
        <dbReference type="HAMAP-Rule" id="MF_00711"/>
    </source>
</evidence>
<proteinExistence type="inferred from homology"/>
<accession>Q8ZM76</accession>
<feature type="initiator methionine" description="Removed" evidence="1">
    <location>
        <position position="1"/>
    </location>
</feature>
<feature type="chain" id="PRO_0000166935" description="Glycine dehydrogenase (decarboxylating)">
    <location>
        <begin position="2"/>
        <end position="957"/>
    </location>
</feature>
<feature type="modified residue" description="N6-(pyridoxal phosphate)lysine" evidence="2">
    <location>
        <position position="708"/>
    </location>
</feature>
<gene>
    <name evidence="2" type="primary">gcvP</name>
    <name type="ordered locus">STM3053</name>
</gene>
<comment type="function">
    <text evidence="2">The glycine cleavage system catalyzes the degradation of glycine. The P protein binds the alpha-amino group of glycine through its pyridoxal phosphate cofactor; CO(2) is released and the remaining methylamine moiety is then transferred to the lipoamide cofactor of the H protein.</text>
</comment>
<comment type="catalytic activity">
    <reaction evidence="2">
        <text>N(6)-[(R)-lipoyl]-L-lysyl-[glycine-cleavage complex H protein] + glycine + H(+) = N(6)-[(R)-S(8)-aminomethyldihydrolipoyl]-L-lysyl-[glycine-cleavage complex H protein] + CO2</text>
        <dbReference type="Rhea" id="RHEA:24304"/>
        <dbReference type="Rhea" id="RHEA-COMP:10494"/>
        <dbReference type="Rhea" id="RHEA-COMP:10495"/>
        <dbReference type="ChEBI" id="CHEBI:15378"/>
        <dbReference type="ChEBI" id="CHEBI:16526"/>
        <dbReference type="ChEBI" id="CHEBI:57305"/>
        <dbReference type="ChEBI" id="CHEBI:83099"/>
        <dbReference type="ChEBI" id="CHEBI:83143"/>
        <dbReference type="EC" id="1.4.4.2"/>
    </reaction>
</comment>
<comment type="cofactor">
    <cofactor evidence="2">
        <name>pyridoxal 5'-phosphate</name>
        <dbReference type="ChEBI" id="CHEBI:597326"/>
    </cofactor>
</comment>
<comment type="subunit">
    <text evidence="2">The glycine cleavage system is composed of four proteins: P, T, L and H.</text>
</comment>
<comment type="similarity">
    <text evidence="2">Belongs to the GcvP family.</text>
</comment>
<name>GCSP_SALTY</name>
<reference key="1">
    <citation type="journal article" date="2001" name="Nature">
        <title>Complete genome sequence of Salmonella enterica serovar Typhimurium LT2.</title>
        <authorList>
            <person name="McClelland M."/>
            <person name="Sanderson K.E."/>
            <person name="Spieth J."/>
            <person name="Clifton S.W."/>
            <person name="Latreille P."/>
            <person name="Courtney L."/>
            <person name="Porwollik S."/>
            <person name="Ali J."/>
            <person name="Dante M."/>
            <person name="Du F."/>
            <person name="Hou S."/>
            <person name="Layman D."/>
            <person name="Leonard S."/>
            <person name="Nguyen C."/>
            <person name="Scott K."/>
            <person name="Holmes A."/>
            <person name="Grewal N."/>
            <person name="Mulvaney E."/>
            <person name="Ryan E."/>
            <person name="Sun H."/>
            <person name="Florea L."/>
            <person name="Miller W."/>
            <person name="Stoneking T."/>
            <person name="Nhan M."/>
            <person name="Waterston R."/>
            <person name="Wilson R.K."/>
        </authorList>
    </citation>
    <scope>NUCLEOTIDE SEQUENCE [LARGE SCALE GENOMIC DNA]</scope>
    <source>
        <strain>LT2 / SGSC1412 / ATCC 700720</strain>
    </source>
</reference>
<keyword id="KW-0560">Oxidoreductase</keyword>
<keyword id="KW-0663">Pyridoxal phosphate</keyword>
<keyword id="KW-1185">Reference proteome</keyword>
<sequence>MTQTLSQLENRGAFIERHIGPDAAQQQEMLNAVGAESLNALTGQIVPKDIQLATPPQVGEAATEYAALAELKAIAGRNKRFTSYIGMGYTAVQLPPVILRNMLENPGWYTAYTPYQPEVSQGRLEALLNFQQVTLDLTGLDMASASLLDEATAAAEAMAMAKRVSKLKNANRFFVASDVHPQTLDVVRTRAETFGFDVIVDDAAKALDHQDVFGVLLQQVGTTGEIHDYSALITELKSRKVVVSVAADFMALVLLTAPGKQGADIVFGSAQRFGVPMGYGGPHAAFFAAKDEFKRSMPGRIIGVSKDAAGNTALRMAMQTREQHIRREKANSNICTSQVLLANIASLYAVYHGPVGLKRIANRIHRLTDILAAGLQQKGLKLRHAHYFDTLCVEVADKAAVLARAEAAEINLRSDIHNAVGITLDETTTRENVAQLFNVLLGDSHGLNIETLDKDVALDSRSIQQSMLRDDAILTHPVFNRYHSETEMMRYMHSLERKDLALNQAMIPLGSCTMKLNAAAEMIPITWPEFAELHPFCPPEQAEGYHQMISQLSDWLVKLTGYDAVCMQPNSGAQGEYAGLLAIRHYHESRNEGHRDICLIPASAHGTNPASAHMAGMQVVVVACDKNGNIDLDDLRAKAEQHAANLSCIMVTYPSTHGVYEETIREVCEVVHQFGGQVYLDGANMNAQVGITSPGFIGADVSHLNLHKTFCIPHGGGGPGMGPIGVKAHLAPFVPGHSVVQIEGMLTRQGAVSAAPFGSASILPISWMYIRMMGAEGLKQASQVAILNANYIASRLKDAYPVLYTGRDGRVAHECILDIRPLKEETGISELDIAKRLIDYGFHAPTMSFPVAGTLMVEPTESEGKAELDRFIDAMLAIRAEIDQVKAGVWPLEDNPLVNAPHIQSELVAEWAHPYSREVAVFPAGVADKYWPTVKRLDDVYGDRNLFCSCVPISDYQ</sequence>